<sequence>MGTVPDPLRVTKASIVAASGKEESRGESQSVSPQPAQPDNNASGIGNVPAELSLQLSAAAQALMQACVSESSQQDMASPGVFSEGEPVSPKQKTPDDFLLHGSKESAAPGLNATAQKELISAPCLISVVQHTHHAIQRDAPNTSTCAVPEGSLVKSEANSNGENPEKPGCPARVTCCSSKNQEGLCDFPSPENSQGILQTPDIASPSADRPEGEGQKVINNITAVSSEPPVREGCSENKQPSATALNTTAERSENPPPSHLTSKGATCSSEARQALLPAQYPVSRFKEASTMTCQAESGAKEVSGRAWQDAEVQAVASVESRSVSTSPSILPAYLKENPAPELENGQEQLRVICHGKGSGNHLLELSNSMVDSQESRQCPSIVPQVHIQAATATPAAFKGGCKPANQPAEGLKSPLIHVTSSQNTETEEDLRLSASKEATSRQPEGTNPDFQKANAIGQISLPAGSQAEINQGLWNSGPREPEIVVKTAKDHKAESSCKPSNSGGGANKDYPPESLDPTDKKGAKDKKPASPLIVKDHAPGATSTLDAKTLLLNPKSQVKEGEGPEVSPAPSPGRKSQQNTLEELRQPKTVMSLSLPSDGTGDSSPGSGKRTPSLSVKASPRRGSRVSEFLKELSVTAAAAQVGLTPGEKKKQLGADSKLHLKQSKRVRDVVWDDQGMTWEVYGASLDPESLGVAIQNHLQRQIREHEKIVKTQSGQTRRSISSDSSSSKKLKGRQHGVLQSMLQNFRRPNCCVRPAPSSVLD</sequence>
<accession>Q8BWS5</accession>
<accession>Q69Z30</accession>
<reference key="1">
    <citation type="journal article" date="2004" name="DNA Res.">
        <title>Prediction of the coding sequences of mouse homologues of KIAA gene: IV. The complete nucleotide sequences of 500 mouse KIAA-homologous cDNAs identified by screening of terminal sequences of cDNA clones randomly sampled from size-fractionated libraries.</title>
        <authorList>
            <person name="Okazaki N."/>
            <person name="Kikuno R."/>
            <person name="Ohara R."/>
            <person name="Inamoto S."/>
            <person name="Koseki H."/>
            <person name="Hiraoka S."/>
            <person name="Saga Y."/>
            <person name="Seino S."/>
            <person name="Nishimura M."/>
            <person name="Kaisho T."/>
            <person name="Hoshino K."/>
            <person name="Kitamura H."/>
            <person name="Nagase T."/>
            <person name="Ohara O."/>
            <person name="Koga H."/>
        </authorList>
    </citation>
    <scope>NUCLEOTIDE SEQUENCE [LARGE SCALE MRNA]</scope>
    <source>
        <tissue>Brain</tissue>
    </source>
</reference>
<reference key="2">
    <citation type="journal article" date="2005" name="Science">
        <title>The transcriptional landscape of the mammalian genome.</title>
        <authorList>
            <person name="Carninci P."/>
            <person name="Kasukawa T."/>
            <person name="Katayama S."/>
            <person name="Gough J."/>
            <person name="Frith M.C."/>
            <person name="Maeda N."/>
            <person name="Oyama R."/>
            <person name="Ravasi T."/>
            <person name="Lenhard B."/>
            <person name="Wells C."/>
            <person name="Kodzius R."/>
            <person name="Shimokawa K."/>
            <person name="Bajic V.B."/>
            <person name="Brenner S.E."/>
            <person name="Batalov S."/>
            <person name="Forrest A.R."/>
            <person name="Zavolan M."/>
            <person name="Davis M.J."/>
            <person name="Wilming L.G."/>
            <person name="Aidinis V."/>
            <person name="Allen J.E."/>
            <person name="Ambesi-Impiombato A."/>
            <person name="Apweiler R."/>
            <person name="Aturaliya R.N."/>
            <person name="Bailey T.L."/>
            <person name="Bansal M."/>
            <person name="Baxter L."/>
            <person name="Beisel K.W."/>
            <person name="Bersano T."/>
            <person name="Bono H."/>
            <person name="Chalk A.M."/>
            <person name="Chiu K.P."/>
            <person name="Choudhary V."/>
            <person name="Christoffels A."/>
            <person name="Clutterbuck D.R."/>
            <person name="Crowe M.L."/>
            <person name="Dalla E."/>
            <person name="Dalrymple B.P."/>
            <person name="de Bono B."/>
            <person name="Della Gatta G."/>
            <person name="di Bernardo D."/>
            <person name="Down T."/>
            <person name="Engstrom P."/>
            <person name="Fagiolini M."/>
            <person name="Faulkner G."/>
            <person name="Fletcher C.F."/>
            <person name="Fukushima T."/>
            <person name="Furuno M."/>
            <person name="Futaki S."/>
            <person name="Gariboldi M."/>
            <person name="Georgii-Hemming P."/>
            <person name="Gingeras T.R."/>
            <person name="Gojobori T."/>
            <person name="Green R.E."/>
            <person name="Gustincich S."/>
            <person name="Harbers M."/>
            <person name="Hayashi Y."/>
            <person name="Hensch T.K."/>
            <person name="Hirokawa N."/>
            <person name="Hill D."/>
            <person name="Huminiecki L."/>
            <person name="Iacono M."/>
            <person name="Ikeo K."/>
            <person name="Iwama A."/>
            <person name="Ishikawa T."/>
            <person name="Jakt M."/>
            <person name="Kanapin A."/>
            <person name="Katoh M."/>
            <person name="Kawasawa Y."/>
            <person name="Kelso J."/>
            <person name="Kitamura H."/>
            <person name="Kitano H."/>
            <person name="Kollias G."/>
            <person name="Krishnan S.P."/>
            <person name="Kruger A."/>
            <person name="Kummerfeld S.K."/>
            <person name="Kurochkin I.V."/>
            <person name="Lareau L.F."/>
            <person name="Lazarevic D."/>
            <person name="Lipovich L."/>
            <person name="Liu J."/>
            <person name="Liuni S."/>
            <person name="McWilliam S."/>
            <person name="Madan Babu M."/>
            <person name="Madera M."/>
            <person name="Marchionni L."/>
            <person name="Matsuda H."/>
            <person name="Matsuzawa S."/>
            <person name="Miki H."/>
            <person name="Mignone F."/>
            <person name="Miyake S."/>
            <person name="Morris K."/>
            <person name="Mottagui-Tabar S."/>
            <person name="Mulder N."/>
            <person name="Nakano N."/>
            <person name="Nakauchi H."/>
            <person name="Ng P."/>
            <person name="Nilsson R."/>
            <person name="Nishiguchi S."/>
            <person name="Nishikawa S."/>
            <person name="Nori F."/>
            <person name="Ohara O."/>
            <person name="Okazaki Y."/>
            <person name="Orlando V."/>
            <person name="Pang K.C."/>
            <person name="Pavan W.J."/>
            <person name="Pavesi G."/>
            <person name="Pesole G."/>
            <person name="Petrovsky N."/>
            <person name="Piazza S."/>
            <person name="Reed J."/>
            <person name="Reid J.F."/>
            <person name="Ring B.Z."/>
            <person name="Ringwald M."/>
            <person name="Rost B."/>
            <person name="Ruan Y."/>
            <person name="Salzberg S.L."/>
            <person name="Sandelin A."/>
            <person name="Schneider C."/>
            <person name="Schoenbach C."/>
            <person name="Sekiguchi K."/>
            <person name="Semple C.A."/>
            <person name="Seno S."/>
            <person name="Sessa L."/>
            <person name="Sheng Y."/>
            <person name="Shibata Y."/>
            <person name="Shimada H."/>
            <person name="Shimada K."/>
            <person name="Silva D."/>
            <person name="Sinclair B."/>
            <person name="Sperling S."/>
            <person name="Stupka E."/>
            <person name="Sugiura K."/>
            <person name="Sultana R."/>
            <person name="Takenaka Y."/>
            <person name="Taki K."/>
            <person name="Tammoja K."/>
            <person name="Tan S.L."/>
            <person name="Tang S."/>
            <person name="Taylor M.S."/>
            <person name="Tegner J."/>
            <person name="Teichmann S.A."/>
            <person name="Ueda H.R."/>
            <person name="van Nimwegen E."/>
            <person name="Verardo R."/>
            <person name="Wei C.L."/>
            <person name="Yagi K."/>
            <person name="Yamanishi H."/>
            <person name="Zabarovsky E."/>
            <person name="Zhu S."/>
            <person name="Zimmer A."/>
            <person name="Hide W."/>
            <person name="Bult C."/>
            <person name="Grimmond S.M."/>
            <person name="Teasdale R.D."/>
            <person name="Liu E.T."/>
            <person name="Brusic V."/>
            <person name="Quackenbush J."/>
            <person name="Wahlestedt C."/>
            <person name="Mattick J.S."/>
            <person name="Hume D.A."/>
            <person name="Kai C."/>
            <person name="Sasaki D."/>
            <person name="Tomaru Y."/>
            <person name="Fukuda S."/>
            <person name="Kanamori-Katayama M."/>
            <person name="Suzuki M."/>
            <person name="Aoki J."/>
            <person name="Arakawa T."/>
            <person name="Iida J."/>
            <person name="Imamura K."/>
            <person name="Itoh M."/>
            <person name="Kato T."/>
            <person name="Kawaji H."/>
            <person name="Kawagashira N."/>
            <person name="Kawashima T."/>
            <person name="Kojima M."/>
            <person name="Kondo S."/>
            <person name="Konno H."/>
            <person name="Nakano K."/>
            <person name="Ninomiya N."/>
            <person name="Nishio T."/>
            <person name="Okada M."/>
            <person name="Plessy C."/>
            <person name="Shibata K."/>
            <person name="Shiraki T."/>
            <person name="Suzuki S."/>
            <person name="Tagami M."/>
            <person name="Waki K."/>
            <person name="Watahiki A."/>
            <person name="Okamura-Oho Y."/>
            <person name="Suzuki H."/>
            <person name="Kawai J."/>
            <person name="Hayashizaki Y."/>
        </authorList>
    </citation>
    <scope>NUCLEOTIDE SEQUENCE [LARGE SCALE MRNA]</scope>
    <source>
        <strain>C57BL/6J</strain>
        <tissue>Liver</tissue>
    </source>
</reference>
<reference key="3">
    <citation type="journal article" date="2004" name="Methods Enzymol.">
        <title>Identification and biochemical analysis of GRIN1 and GRIN2.</title>
        <authorList>
            <person name="Iida N."/>
            <person name="Kozasa T."/>
        </authorList>
    </citation>
    <scope>IDENTIFICATION</scope>
</reference>
<reference key="4">
    <citation type="journal article" date="2007" name="Proc. Natl. Acad. Sci. U.S.A.">
        <title>Large-scale phosphorylation analysis of mouse liver.</title>
        <authorList>
            <person name="Villen J."/>
            <person name="Beausoleil S.A."/>
            <person name="Gerber S.A."/>
            <person name="Gygi S.P."/>
        </authorList>
    </citation>
    <scope>PHOSPHORYLATION [LARGE SCALE ANALYSIS] AT SER-359</scope>
    <scope>IDENTIFICATION BY MASS SPECTROMETRY [LARGE SCALE ANALYSIS]</scope>
    <source>
        <tissue>Liver</tissue>
    </source>
</reference>
<reference key="5">
    <citation type="journal article" date="2010" name="Cell">
        <title>A tissue-specific atlas of mouse protein phosphorylation and expression.</title>
        <authorList>
            <person name="Huttlin E.L."/>
            <person name="Jedrychowski M.P."/>
            <person name="Elias J.E."/>
            <person name="Goswami T."/>
            <person name="Rad R."/>
            <person name="Beausoleil S.A."/>
            <person name="Villen J."/>
            <person name="Haas W."/>
            <person name="Sowa M.E."/>
            <person name="Gygi S.P."/>
        </authorList>
    </citation>
    <scope>PHOSPHORYLATION [LARGE SCALE ANALYSIS] AT SER-323 AND SER-359</scope>
    <scope>IDENTIFICATION BY MASS SPECTROMETRY [LARGE SCALE ANALYSIS]</scope>
    <source>
        <tissue>Brain</tissue>
        <tissue>Kidney</tissue>
        <tissue>Liver</tissue>
    </source>
</reference>
<evidence type="ECO:0000250" key="1"/>
<evidence type="ECO:0000256" key="2">
    <source>
        <dbReference type="SAM" id="MobiDB-lite"/>
    </source>
</evidence>
<evidence type="ECO:0000305" key="3"/>
<evidence type="ECO:0007744" key="4">
    <source>
    </source>
</evidence>
<evidence type="ECO:0007744" key="5">
    <source>
    </source>
</evidence>
<comment type="function">
    <text evidence="1">May be involved in neurite outgrowth.</text>
</comment>
<comment type="sequence caution" evidence="3">
    <conflict type="erroneous initiation">
        <sequence resource="EMBL-CDS" id="BAD32614"/>
    </conflict>
</comment>
<dbReference type="EMBL" id="AK173336">
    <property type="protein sequence ID" value="BAD32614.1"/>
    <property type="status" value="ALT_INIT"/>
    <property type="molecule type" value="mRNA"/>
</dbReference>
<dbReference type="EMBL" id="AK050148">
    <property type="protein sequence ID" value="BAC34093.1"/>
    <property type="molecule type" value="mRNA"/>
</dbReference>
<dbReference type="CCDS" id="CCDS20199.1"/>
<dbReference type="RefSeq" id="NP_899006.1">
    <property type="nucleotide sequence ID" value="NM_183183.3"/>
</dbReference>
<dbReference type="BioGRID" id="232514">
    <property type="interactions" value="1"/>
</dbReference>
<dbReference type="FunCoup" id="Q8BWS5">
    <property type="interactions" value="1095"/>
</dbReference>
<dbReference type="IntAct" id="Q8BWS5">
    <property type="interactions" value="2"/>
</dbReference>
<dbReference type="MINT" id="Q8BWS5"/>
<dbReference type="STRING" id="10090.ENSMUSP00000051805"/>
<dbReference type="GlyGen" id="Q8BWS5">
    <property type="glycosylation" value="4 sites, 1 N-linked glycan (1 site), 1 O-linked glycan (2 sites)"/>
</dbReference>
<dbReference type="iPTMnet" id="Q8BWS5"/>
<dbReference type="PhosphoSitePlus" id="Q8BWS5"/>
<dbReference type="SwissPalm" id="Q8BWS5"/>
<dbReference type="jPOST" id="Q8BWS5"/>
<dbReference type="PaxDb" id="10090-ENSMUSP00000051805"/>
<dbReference type="ProteomicsDB" id="269632"/>
<dbReference type="Antibodypedia" id="44913">
    <property type="antibodies" value="129 antibodies from 29 providers"/>
</dbReference>
<dbReference type="DNASU" id="243385"/>
<dbReference type="Ensembl" id="ENSMUST00000051065.6">
    <property type="protein sequence ID" value="ENSMUSP00000051805.5"/>
    <property type="gene ID" value="ENSMUSG00000045441.6"/>
</dbReference>
<dbReference type="GeneID" id="243385"/>
<dbReference type="KEGG" id="mmu:243385"/>
<dbReference type="UCSC" id="uc009cdk.1">
    <property type="organism name" value="mouse"/>
</dbReference>
<dbReference type="AGR" id="MGI:1924785"/>
<dbReference type="CTD" id="285513"/>
<dbReference type="MGI" id="MGI:1924785">
    <property type="gene designation" value="Gprin3"/>
</dbReference>
<dbReference type="VEuPathDB" id="HostDB:ENSMUSG00000045441"/>
<dbReference type="eggNOG" id="ENOG502QTMW">
    <property type="taxonomic scope" value="Eukaryota"/>
</dbReference>
<dbReference type="GeneTree" id="ENSGT00570000079168"/>
<dbReference type="HOGENOM" id="CLU_020316_0_0_1"/>
<dbReference type="InParanoid" id="Q8BWS5"/>
<dbReference type="OMA" id="EQLHIIY"/>
<dbReference type="OrthoDB" id="10049175at2759"/>
<dbReference type="PhylomeDB" id="Q8BWS5"/>
<dbReference type="TreeFam" id="TF337047"/>
<dbReference type="BioGRID-ORCS" id="243385">
    <property type="hits" value="1 hit in 77 CRISPR screens"/>
</dbReference>
<dbReference type="CD-CODE" id="CE726F99">
    <property type="entry name" value="Postsynaptic density"/>
</dbReference>
<dbReference type="PRO" id="PR:Q8BWS5"/>
<dbReference type="Proteomes" id="UP000000589">
    <property type="component" value="Chromosome 6"/>
</dbReference>
<dbReference type="RNAct" id="Q8BWS5">
    <property type="molecule type" value="protein"/>
</dbReference>
<dbReference type="Bgee" id="ENSMUSG00000045441">
    <property type="expression patterns" value="Expressed in caudate-putamen and 142 other cell types or tissues"/>
</dbReference>
<dbReference type="ExpressionAtlas" id="Q8BWS5">
    <property type="expression patterns" value="baseline and differential"/>
</dbReference>
<dbReference type="GO" id="GO:0045202">
    <property type="term" value="C:synapse"/>
    <property type="evidence" value="ECO:0007669"/>
    <property type="project" value="GOC"/>
</dbReference>
<dbReference type="GO" id="GO:0048667">
    <property type="term" value="P:cell morphogenesis involved in neuron differentiation"/>
    <property type="evidence" value="ECO:0000315"/>
    <property type="project" value="MGI"/>
</dbReference>
<dbReference type="GO" id="GO:0098976">
    <property type="term" value="P:excitatory chemical synaptic transmission"/>
    <property type="evidence" value="ECO:0000315"/>
    <property type="project" value="MGI"/>
</dbReference>
<dbReference type="GO" id="GO:0007626">
    <property type="term" value="P:locomotory behavior"/>
    <property type="evidence" value="ECO:0000315"/>
    <property type="project" value="MGI"/>
</dbReference>
<dbReference type="GO" id="GO:0019228">
    <property type="term" value="P:neuronal action potential"/>
    <property type="evidence" value="ECO:0000315"/>
    <property type="project" value="MGI"/>
</dbReference>
<dbReference type="GO" id="GO:0042220">
    <property type="term" value="P:response to cocaine"/>
    <property type="evidence" value="ECO:0000315"/>
    <property type="project" value="MGI"/>
</dbReference>
<dbReference type="GO" id="GO:0070561">
    <property type="term" value="P:vitamin D receptor signaling pathway"/>
    <property type="evidence" value="ECO:0000315"/>
    <property type="project" value="MGI"/>
</dbReference>
<dbReference type="InterPro" id="IPR026646">
    <property type="entry name" value="GPRIN2-like/GPRIN3"/>
</dbReference>
<dbReference type="InterPro" id="IPR032745">
    <property type="entry name" value="GRIN_C"/>
</dbReference>
<dbReference type="PANTHER" id="PTHR15718:SF6">
    <property type="entry name" value="G PROTEIN-REGULATED INDUCER OF NEURITE OUTGROWTH 3"/>
    <property type="match status" value="1"/>
</dbReference>
<dbReference type="PANTHER" id="PTHR15718">
    <property type="entry name" value="G PROTEIN-REGULATED INDUCER OF NEURITE OUTGROWTH C-TERMINAL DOMAIN-CONTAINING PROTEIN"/>
    <property type="match status" value="1"/>
</dbReference>
<dbReference type="Pfam" id="PF15235">
    <property type="entry name" value="GRIN_C"/>
    <property type="match status" value="1"/>
</dbReference>
<feature type="chain" id="PRO_0000251951" description="G protein-regulated inducer of neurite outgrowth 3">
    <location>
        <begin position="1"/>
        <end position="763"/>
    </location>
</feature>
<feature type="region of interest" description="Disordered" evidence="2">
    <location>
        <begin position="1"/>
        <end position="48"/>
    </location>
</feature>
<feature type="region of interest" description="Disordered" evidence="2">
    <location>
        <begin position="65"/>
        <end position="111"/>
    </location>
</feature>
<feature type="region of interest" description="Disordered" evidence="2">
    <location>
        <begin position="192"/>
        <end position="268"/>
    </location>
</feature>
<feature type="region of interest" description="Disordered" evidence="2">
    <location>
        <begin position="420"/>
        <end position="452"/>
    </location>
</feature>
<feature type="region of interest" description="Disordered" evidence="2">
    <location>
        <begin position="471"/>
        <end position="624"/>
    </location>
</feature>
<feature type="region of interest" description="Disordered" evidence="2">
    <location>
        <begin position="711"/>
        <end position="737"/>
    </location>
</feature>
<feature type="compositionally biased region" description="Polar residues" evidence="2">
    <location>
        <begin position="27"/>
        <end position="44"/>
    </location>
</feature>
<feature type="compositionally biased region" description="Basic and acidic residues" evidence="2">
    <location>
        <begin position="93"/>
        <end position="104"/>
    </location>
</feature>
<feature type="compositionally biased region" description="Polar residues" evidence="2">
    <location>
        <begin position="237"/>
        <end position="250"/>
    </location>
</feature>
<feature type="compositionally biased region" description="Polar residues" evidence="2">
    <location>
        <begin position="437"/>
        <end position="450"/>
    </location>
</feature>
<feature type="compositionally biased region" description="Basic and acidic residues" evidence="2">
    <location>
        <begin position="480"/>
        <end position="496"/>
    </location>
</feature>
<feature type="compositionally biased region" description="Basic and acidic residues" evidence="2">
    <location>
        <begin position="518"/>
        <end position="539"/>
    </location>
</feature>
<feature type="compositionally biased region" description="Low complexity" evidence="2">
    <location>
        <begin position="593"/>
        <end position="609"/>
    </location>
</feature>
<feature type="modified residue" description="Phosphoserine" evidence="5">
    <location>
        <position position="323"/>
    </location>
</feature>
<feature type="modified residue" description="Phosphoserine" evidence="4 5">
    <location>
        <position position="359"/>
    </location>
</feature>
<proteinExistence type="evidence at protein level"/>
<keyword id="KW-0597">Phosphoprotein</keyword>
<keyword id="KW-1185">Reference proteome</keyword>
<name>GRIN3_MOUSE</name>
<organism>
    <name type="scientific">Mus musculus</name>
    <name type="common">Mouse</name>
    <dbReference type="NCBI Taxonomy" id="10090"/>
    <lineage>
        <taxon>Eukaryota</taxon>
        <taxon>Metazoa</taxon>
        <taxon>Chordata</taxon>
        <taxon>Craniata</taxon>
        <taxon>Vertebrata</taxon>
        <taxon>Euteleostomi</taxon>
        <taxon>Mammalia</taxon>
        <taxon>Eutheria</taxon>
        <taxon>Euarchontoglires</taxon>
        <taxon>Glires</taxon>
        <taxon>Rodentia</taxon>
        <taxon>Myomorpha</taxon>
        <taxon>Muroidea</taxon>
        <taxon>Muridae</taxon>
        <taxon>Murinae</taxon>
        <taxon>Mus</taxon>
        <taxon>Mus</taxon>
    </lineage>
</organism>
<gene>
    <name type="primary">Gprin3</name>
    <name type="synonym">Kiaa2027</name>
</gene>
<protein>
    <recommendedName>
        <fullName>G protein-regulated inducer of neurite outgrowth 3</fullName>
        <shortName>GRIN3</shortName>
    </recommendedName>
</protein>